<proteinExistence type="inferred from homology"/>
<sequence length="214" mass="23740">MNLEKQLHDGLKAIPELSADTGHLCSRLLRYIELIAKWNSTHNLTSVRNPESMITRHMLDSLVILPHVSGPGIVDVGSGAGFPGIPVALARPEWQVTLVESNQKKAAFLLQAVLELGLPNISVKQGRVEKIKLENKVDTVVSRAFSSLERFMSLSKHLSENDSDHCRFIAMKGEFPDMELMQLSSEFVVEKIVAVTVPGLKAKRHLVVIRYQPG</sequence>
<organism>
    <name type="scientific">Nitrosomonas europaea (strain ATCC 19718 / CIP 103999 / KCTC 2705 / NBRC 14298)</name>
    <dbReference type="NCBI Taxonomy" id="228410"/>
    <lineage>
        <taxon>Bacteria</taxon>
        <taxon>Pseudomonadati</taxon>
        <taxon>Pseudomonadota</taxon>
        <taxon>Betaproteobacteria</taxon>
        <taxon>Nitrosomonadales</taxon>
        <taxon>Nitrosomonadaceae</taxon>
        <taxon>Nitrosomonas</taxon>
    </lineage>
</organism>
<evidence type="ECO:0000255" key="1">
    <source>
        <dbReference type="HAMAP-Rule" id="MF_00074"/>
    </source>
</evidence>
<accession>Q82S79</accession>
<keyword id="KW-0963">Cytoplasm</keyword>
<keyword id="KW-0489">Methyltransferase</keyword>
<keyword id="KW-1185">Reference proteome</keyword>
<keyword id="KW-0698">rRNA processing</keyword>
<keyword id="KW-0949">S-adenosyl-L-methionine</keyword>
<keyword id="KW-0808">Transferase</keyword>
<protein>
    <recommendedName>
        <fullName evidence="1">Ribosomal RNA small subunit methyltransferase G</fullName>
        <ecNumber evidence="1">2.1.1.170</ecNumber>
    </recommendedName>
    <alternativeName>
        <fullName evidence="1">16S rRNA 7-methylguanosine methyltransferase</fullName>
        <shortName evidence="1">16S rRNA m7G methyltransferase</shortName>
    </alternativeName>
</protein>
<comment type="function">
    <text evidence="1">Specifically methylates the N7 position of guanine in position 527 of 16S rRNA.</text>
</comment>
<comment type="catalytic activity">
    <reaction evidence="1">
        <text>guanosine(527) in 16S rRNA + S-adenosyl-L-methionine = N(7)-methylguanosine(527) in 16S rRNA + S-adenosyl-L-homocysteine</text>
        <dbReference type="Rhea" id="RHEA:42732"/>
        <dbReference type="Rhea" id="RHEA-COMP:10209"/>
        <dbReference type="Rhea" id="RHEA-COMP:10210"/>
        <dbReference type="ChEBI" id="CHEBI:57856"/>
        <dbReference type="ChEBI" id="CHEBI:59789"/>
        <dbReference type="ChEBI" id="CHEBI:74269"/>
        <dbReference type="ChEBI" id="CHEBI:74480"/>
        <dbReference type="EC" id="2.1.1.170"/>
    </reaction>
</comment>
<comment type="subcellular location">
    <subcellularLocation>
        <location evidence="1">Cytoplasm</location>
    </subcellularLocation>
</comment>
<comment type="similarity">
    <text evidence="1">Belongs to the methyltransferase superfamily. RNA methyltransferase RsmG family.</text>
</comment>
<gene>
    <name evidence="1" type="primary">rsmG</name>
    <name type="ordered locus">NE2475</name>
</gene>
<feature type="chain" id="PRO_0000184294" description="Ribosomal RNA small subunit methyltransferase G">
    <location>
        <begin position="1"/>
        <end position="214"/>
    </location>
</feature>
<feature type="binding site" evidence="1">
    <location>
        <position position="77"/>
    </location>
    <ligand>
        <name>S-adenosyl-L-methionine</name>
        <dbReference type="ChEBI" id="CHEBI:59789"/>
    </ligand>
</feature>
<feature type="binding site" evidence="1">
    <location>
        <position position="82"/>
    </location>
    <ligand>
        <name>S-adenosyl-L-methionine</name>
        <dbReference type="ChEBI" id="CHEBI:59789"/>
    </ligand>
</feature>
<feature type="binding site" evidence="1">
    <location>
        <begin position="128"/>
        <end position="129"/>
    </location>
    <ligand>
        <name>S-adenosyl-L-methionine</name>
        <dbReference type="ChEBI" id="CHEBI:59789"/>
    </ligand>
</feature>
<feature type="binding site" evidence="1">
    <location>
        <position position="143"/>
    </location>
    <ligand>
        <name>S-adenosyl-L-methionine</name>
        <dbReference type="ChEBI" id="CHEBI:59789"/>
    </ligand>
</feature>
<name>RSMG_NITEU</name>
<dbReference type="EC" id="2.1.1.170" evidence="1"/>
<dbReference type="EMBL" id="AL954747">
    <property type="protein sequence ID" value="CAD86387.1"/>
    <property type="molecule type" value="Genomic_DNA"/>
</dbReference>
<dbReference type="RefSeq" id="WP_011112937.1">
    <property type="nucleotide sequence ID" value="NC_004757.1"/>
</dbReference>
<dbReference type="SMR" id="Q82S79"/>
<dbReference type="STRING" id="228410.NE2475"/>
<dbReference type="GeneID" id="87105604"/>
<dbReference type="KEGG" id="neu:NE2475"/>
<dbReference type="eggNOG" id="COG0357">
    <property type="taxonomic scope" value="Bacteria"/>
</dbReference>
<dbReference type="HOGENOM" id="CLU_065341_2_0_4"/>
<dbReference type="OrthoDB" id="9808773at2"/>
<dbReference type="PhylomeDB" id="Q82S79"/>
<dbReference type="Proteomes" id="UP000001416">
    <property type="component" value="Chromosome"/>
</dbReference>
<dbReference type="GO" id="GO:0005829">
    <property type="term" value="C:cytosol"/>
    <property type="evidence" value="ECO:0007669"/>
    <property type="project" value="TreeGrafter"/>
</dbReference>
<dbReference type="GO" id="GO:0070043">
    <property type="term" value="F:rRNA (guanine-N7-)-methyltransferase activity"/>
    <property type="evidence" value="ECO:0007669"/>
    <property type="project" value="UniProtKB-UniRule"/>
</dbReference>
<dbReference type="CDD" id="cd02440">
    <property type="entry name" value="AdoMet_MTases"/>
    <property type="match status" value="1"/>
</dbReference>
<dbReference type="Gene3D" id="3.40.50.150">
    <property type="entry name" value="Vaccinia Virus protein VP39"/>
    <property type="match status" value="1"/>
</dbReference>
<dbReference type="HAMAP" id="MF_00074">
    <property type="entry name" value="16SrRNA_methyltr_G"/>
    <property type="match status" value="1"/>
</dbReference>
<dbReference type="InterPro" id="IPR003682">
    <property type="entry name" value="rRNA_ssu_MeTfrase_G"/>
</dbReference>
<dbReference type="InterPro" id="IPR029063">
    <property type="entry name" value="SAM-dependent_MTases_sf"/>
</dbReference>
<dbReference type="NCBIfam" id="TIGR00138">
    <property type="entry name" value="rsmG_gidB"/>
    <property type="match status" value="1"/>
</dbReference>
<dbReference type="PANTHER" id="PTHR31760">
    <property type="entry name" value="S-ADENOSYL-L-METHIONINE-DEPENDENT METHYLTRANSFERASES SUPERFAMILY PROTEIN"/>
    <property type="match status" value="1"/>
</dbReference>
<dbReference type="PANTHER" id="PTHR31760:SF0">
    <property type="entry name" value="S-ADENOSYL-L-METHIONINE-DEPENDENT METHYLTRANSFERASES SUPERFAMILY PROTEIN"/>
    <property type="match status" value="1"/>
</dbReference>
<dbReference type="Pfam" id="PF02527">
    <property type="entry name" value="GidB"/>
    <property type="match status" value="1"/>
</dbReference>
<dbReference type="PIRSF" id="PIRSF003078">
    <property type="entry name" value="GidB"/>
    <property type="match status" value="1"/>
</dbReference>
<dbReference type="SUPFAM" id="SSF53335">
    <property type="entry name" value="S-adenosyl-L-methionine-dependent methyltransferases"/>
    <property type="match status" value="1"/>
</dbReference>
<reference key="1">
    <citation type="journal article" date="2003" name="J. Bacteriol.">
        <title>Complete genome sequence of the ammonia-oxidizing bacterium and obligate chemolithoautotroph Nitrosomonas europaea.</title>
        <authorList>
            <person name="Chain P."/>
            <person name="Lamerdin J.E."/>
            <person name="Larimer F.W."/>
            <person name="Regala W."/>
            <person name="Lao V."/>
            <person name="Land M.L."/>
            <person name="Hauser L."/>
            <person name="Hooper A.B."/>
            <person name="Klotz M.G."/>
            <person name="Norton J."/>
            <person name="Sayavedra-Soto L.A."/>
            <person name="Arciero D.M."/>
            <person name="Hommes N.G."/>
            <person name="Whittaker M.M."/>
            <person name="Arp D.J."/>
        </authorList>
    </citation>
    <scope>NUCLEOTIDE SEQUENCE [LARGE SCALE GENOMIC DNA]</scope>
    <source>
        <strain>ATCC 19718 / CIP 103999 / KCTC 2705 / NBRC 14298</strain>
    </source>
</reference>